<accession>Q3JZT4</accession>
<keyword id="KW-1003">Cell membrane</keyword>
<keyword id="KW-0472">Membrane</keyword>
<keyword id="KW-0812">Transmembrane</keyword>
<keyword id="KW-1133">Transmembrane helix</keyword>
<name>Y1616_STRA1</name>
<proteinExistence type="inferred from homology"/>
<dbReference type="EMBL" id="CP000114">
    <property type="protein sequence ID" value="ABA46231.1"/>
    <property type="molecule type" value="Genomic_DNA"/>
</dbReference>
<dbReference type="RefSeq" id="WP_000108275.1">
    <property type="nucleotide sequence ID" value="NC_007432.1"/>
</dbReference>
<dbReference type="SMR" id="Q3JZT4"/>
<dbReference type="KEGG" id="sak:SAK_1616"/>
<dbReference type="HOGENOM" id="CLU_180108_0_0_9"/>
<dbReference type="GO" id="GO:0005886">
    <property type="term" value="C:plasma membrane"/>
    <property type="evidence" value="ECO:0007669"/>
    <property type="project" value="UniProtKB-SubCell"/>
</dbReference>
<dbReference type="HAMAP" id="MF_00363">
    <property type="entry name" value="UPF0154"/>
    <property type="match status" value="1"/>
</dbReference>
<dbReference type="InterPro" id="IPR005359">
    <property type="entry name" value="UPF0154"/>
</dbReference>
<dbReference type="Pfam" id="PF03672">
    <property type="entry name" value="UPF0154"/>
    <property type="match status" value="1"/>
</dbReference>
<sequence length="79" mass="8890">MSTTIWILLIIVALFGGLVGGIFIARKQIEKEIGEHPRLTPDAIREMMSQMGQKPSEAKVQQTYRNIVKHAKTAIKTKK</sequence>
<organism>
    <name type="scientific">Streptococcus agalactiae serotype Ia (strain ATCC 27591 / A909 / CDC SS700)</name>
    <dbReference type="NCBI Taxonomy" id="205921"/>
    <lineage>
        <taxon>Bacteria</taxon>
        <taxon>Bacillati</taxon>
        <taxon>Bacillota</taxon>
        <taxon>Bacilli</taxon>
        <taxon>Lactobacillales</taxon>
        <taxon>Streptococcaceae</taxon>
        <taxon>Streptococcus</taxon>
    </lineage>
</organism>
<comment type="subcellular location">
    <subcellularLocation>
        <location evidence="1">Cell membrane</location>
        <topology evidence="1">Single-pass membrane protein</topology>
    </subcellularLocation>
</comment>
<comment type="similarity">
    <text evidence="1">Belongs to the UPF0154 family.</text>
</comment>
<feature type="chain" id="PRO_1000005639" description="UPF0154 protein SAK_1616">
    <location>
        <begin position="1"/>
        <end position="79"/>
    </location>
</feature>
<feature type="transmembrane region" description="Helical" evidence="1">
    <location>
        <begin position="5"/>
        <end position="25"/>
    </location>
</feature>
<protein>
    <recommendedName>
        <fullName evidence="1">UPF0154 protein SAK_1616</fullName>
    </recommendedName>
</protein>
<evidence type="ECO:0000255" key="1">
    <source>
        <dbReference type="HAMAP-Rule" id="MF_00363"/>
    </source>
</evidence>
<reference key="1">
    <citation type="journal article" date="2005" name="Proc. Natl. Acad. Sci. U.S.A.">
        <title>Genome analysis of multiple pathogenic isolates of Streptococcus agalactiae: implications for the microbial 'pan-genome'.</title>
        <authorList>
            <person name="Tettelin H."/>
            <person name="Masignani V."/>
            <person name="Cieslewicz M.J."/>
            <person name="Donati C."/>
            <person name="Medini D."/>
            <person name="Ward N.L."/>
            <person name="Angiuoli S.V."/>
            <person name="Crabtree J."/>
            <person name="Jones A.L."/>
            <person name="Durkin A.S."/>
            <person name="DeBoy R.T."/>
            <person name="Davidsen T.M."/>
            <person name="Mora M."/>
            <person name="Scarselli M."/>
            <person name="Margarit y Ros I."/>
            <person name="Peterson J.D."/>
            <person name="Hauser C.R."/>
            <person name="Sundaram J.P."/>
            <person name="Nelson W.C."/>
            <person name="Madupu R."/>
            <person name="Brinkac L.M."/>
            <person name="Dodson R.J."/>
            <person name="Rosovitz M.J."/>
            <person name="Sullivan S.A."/>
            <person name="Daugherty S.C."/>
            <person name="Haft D.H."/>
            <person name="Selengut J."/>
            <person name="Gwinn M.L."/>
            <person name="Zhou L."/>
            <person name="Zafar N."/>
            <person name="Khouri H."/>
            <person name="Radune D."/>
            <person name="Dimitrov G."/>
            <person name="Watkins K."/>
            <person name="O'Connor K.J."/>
            <person name="Smith S."/>
            <person name="Utterback T.R."/>
            <person name="White O."/>
            <person name="Rubens C.E."/>
            <person name="Grandi G."/>
            <person name="Madoff L.C."/>
            <person name="Kasper D.L."/>
            <person name="Telford J.L."/>
            <person name="Wessels M.R."/>
            <person name="Rappuoli R."/>
            <person name="Fraser C.M."/>
        </authorList>
    </citation>
    <scope>NUCLEOTIDE SEQUENCE [LARGE SCALE GENOMIC DNA]</scope>
    <source>
        <strain>ATCC 27591 / A909 / CDC SS700</strain>
    </source>
</reference>
<gene>
    <name type="ordered locus">SAK_1616</name>
</gene>